<keyword id="KW-1005">Bacterial flagellum biogenesis</keyword>
<keyword id="KW-1185">Reference proteome</keyword>
<keyword id="KW-0678">Repressor</keyword>
<keyword id="KW-0694">RNA-binding</keyword>
<accession>Q89HZ2</accession>
<feature type="chain" id="PRO_0000217151" description="Probable flagellum biosynthesis repressor protein FlbT 1">
    <location>
        <begin position="1"/>
        <end position="146"/>
    </location>
</feature>
<dbReference type="EMBL" id="BA000040">
    <property type="protein sequence ID" value="BAC51112.1"/>
    <property type="molecule type" value="Genomic_DNA"/>
</dbReference>
<dbReference type="RefSeq" id="NP_772487.1">
    <property type="nucleotide sequence ID" value="NC_004463.1"/>
</dbReference>
<dbReference type="RefSeq" id="WP_011088588.1">
    <property type="nucleotide sequence ID" value="NC_004463.1"/>
</dbReference>
<dbReference type="STRING" id="224911.AAV28_26770"/>
<dbReference type="EnsemblBacteria" id="BAC51112">
    <property type="protein sequence ID" value="BAC51112"/>
    <property type="gene ID" value="BAC51112"/>
</dbReference>
<dbReference type="GeneID" id="46492845"/>
<dbReference type="KEGG" id="bja:blr5847"/>
<dbReference type="PATRIC" id="fig|224911.44.peg.5793"/>
<dbReference type="eggNOG" id="COG5443">
    <property type="taxonomic scope" value="Bacteria"/>
</dbReference>
<dbReference type="HOGENOM" id="CLU_130913_0_0_5"/>
<dbReference type="InParanoid" id="Q89HZ2"/>
<dbReference type="OrthoDB" id="8561314at2"/>
<dbReference type="PhylomeDB" id="Q89HZ2"/>
<dbReference type="Proteomes" id="UP000002526">
    <property type="component" value="Chromosome"/>
</dbReference>
<dbReference type="GO" id="GO:0048027">
    <property type="term" value="F:mRNA 5'-UTR binding"/>
    <property type="evidence" value="ECO:0007669"/>
    <property type="project" value="UniProtKB-UniRule"/>
</dbReference>
<dbReference type="GO" id="GO:0044781">
    <property type="term" value="P:bacterial-type flagellum organization"/>
    <property type="evidence" value="ECO:0007669"/>
    <property type="project" value="UniProtKB-KW"/>
</dbReference>
<dbReference type="GO" id="GO:0006402">
    <property type="term" value="P:mRNA catabolic process"/>
    <property type="evidence" value="ECO:0007669"/>
    <property type="project" value="InterPro"/>
</dbReference>
<dbReference type="GO" id="GO:1902209">
    <property type="term" value="P:negative regulation of bacterial-type flagellum assembly"/>
    <property type="evidence" value="ECO:0007669"/>
    <property type="project" value="UniProtKB-UniRule"/>
</dbReference>
<dbReference type="HAMAP" id="MF_00783">
    <property type="entry name" value="FlbT"/>
    <property type="match status" value="1"/>
</dbReference>
<dbReference type="InterPro" id="IPR009967">
    <property type="entry name" value="Flagellum_FlbT"/>
</dbReference>
<dbReference type="NCBIfam" id="NF009432">
    <property type="entry name" value="PRK12791.1"/>
    <property type="match status" value="1"/>
</dbReference>
<dbReference type="Pfam" id="PF07378">
    <property type="entry name" value="FlbT"/>
    <property type="match status" value="1"/>
</dbReference>
<dbReference type="PIRSF" id="PIRSF009533">
    <property type="entry name" value="FlbT"/>
    <property type="match status" value="1"/>
</dbReference>
<sequence length="146" mass="16377">MALKVELKPHERIIVGNSVITNTDQRARLLIDGENVPILRERDILTPETANTPAKLVYLAVQLMYISPDPQTQHGTYFNLVRDIVTAVPSSWPIIEAINNNILNGDLYRALKDARKLIAYEEKLRGQYEATHPKAEADKDDVSTAA</sequence>
<protein>
    <recommendedName>
        <fullName evidence="1">Probable flagellum biosynthesis repressor protein FlbT 1</fullName>
    </recommendedName>
</protein>
<evidence type="ECO:0000255" key="1">
    <source>
        <dbReference type="HAMAP-Rule" id="MF_00783"/>
    </source>
</evidence>
<proteinExistence type="inferred from homology"/>
<reference key="1">
    <citation type="journal article" date="2002" name="DNA Res.">
        <title>Complete genomic sequence of nitrogen-fixing symbiotic bacterium Bradyrhizobium japonicum USDA110.</title>
        <authorList>
            <person name="Kaneko T."/>
            <person name="Nakamura Y."/>
            <person name="Sato S."/>
            <person name="Minamisawa K."/>
            <person name="Uchiumi T."/>
            <person name="Sasamoto S."/>
            <person name="Watanabe A."/>
            <person name="Idesawa K."/>
            <person name="Iriguchi M."/>
            <person name="Kawashima K."/>
            <person name="Kohara M."/>
            <person name="Matsumoto M."/>
            <person name="Shimpo S."/>
            <person name="Tsuruoka H."/>
            <person name="Wada T."/>
            <person name="Yamada M."/>
            <person name="Tabata S."/>
        </authorList>
    </citation>
    <scope>NUCLEOTIDE SEQUENCE [LARGE SCALE GENOMIC DNA]</scope>
    <source>
        <strain>JCM 10833 / BCRC 13528 / IAM 13628 / NBRC 14792 / USDA 110</strain>
    </source>
</reference>
<comment type="function">
    <text evidence="1">Has a post-transcriptional repressor function in flagellum biogenesis. Associates with the 5'-UTR of fljK mRNA and promotes its degradation.</text>
</comment>
<comment type="similarity">
    <text evidence="1">Belongs to the FlbT family.</text>
</comment>
<gene>
    <name evidence="1" type="primary">flbT1</name>
    <name type="ordered locus">blr5847</name>
</gene>
<name>FLBT1_BRADU</name>
<organism>
    <name type="scientific">Bradyrhizobium diazoefficiens (strain JCM 10833 / BCRC 13528 / IAM 13628 / NBRC 14792 / USDA 110)</name>
    <dbReference type="NCBI Taxonomy" id="224911"/>
    <lineage>
        <taxon>Bacteria</taxon>
        <taxon>Pseudomonadati</taxon>
        <taxon>Pseudomonadota</taxon>
        <taxon>Alphaproteobacteria</taxon>
        <taxon>Hyphomicrobiales</taxon>
        <taxon>Nitrobacteraceae</taxon>
        <taxon>Bradyrhizobium</taxon>
    </lineage>
</organism>